<keyword id="KW-0560">Oxidoreductase</keyword>
<keyword id="KW-1185">Reference proteome</keyword>
<dbReference type="EC" id="1.8.4.11" evidence="1"/>
<dbReference type="EMBL" id="AL646052">
    <property type="protein sequence ID" value="CAD14294.1"/>
    <property type="molecule type" value="Genomic_DNA"/>
</dbReference>
<dbReference type="SMR" id="Q8Y1C6"/>
<dbReference type="STRING" id="267608.RSc0764"/>
<dbReference type="EnsemblBacteria" id="CAD14294">
    <property type="protein sequence ID" value="CAD14294"/>
    <property type="gene ID" value="RSc0764"/>
</dbReference>
<dbReference type="KEGG" id="rso:RSc0764"/>
<dbReference type="eggNOG" id="COG0225">
    <property type="taxonomic scope" value="Bacteria"/>
</dbReference>
<dbReference type="HOGENOM" id="CLU_031040_10_0_4"/>
<dbReference type="Proteomes" id="UP000001436">
    <property type="component" value="Chromosome"/>
</dbReference>
<dbReference type="GO" id="GO:0033744">
    <property type="term" value="F:L-methionine:thioredoxin-disulfide S-oxidoreductase activity"/>
    <property type="evidence" value="ECO:0007669"/>
    <property type="project" value="RHEA"/>
</dbReference>
<dbReference type="GO" id="GO:0008113">
    <property type="term" value="F:peptide-methionine (S)-S-oxide reductase activity"/>
    <property type="evidence" value="ECO:0007669"/>
    <property type="project" value="UniProtKB-UniRule"/>
</dbReference>
<dbReference type="GO" id="GO:0036211">
    <property type="term" value="P:protein modification process"/>
    <property type="evidence" value="ECO:0007669"/>
    <property type="project" value="UniProtKB-UniRule"/>
</dbReference>
<dbReference type="Gene3D" id="3.30.1060.10">
    <property type="entry name" value="Peptide methionine sulphoxide reductase MsrA"/>
    <property type="match status" value="1"/>
</dbReference>
<dbReference type="HAMAP" id="MF_01401">
    <property type="entry name" value="MsrA"/>
    <property type="match status" value="1"/>
</dbReference>
<dbReference type="InterPro" id="IPR002569">
    <property type="entry name" value="Met_Sox_Rdtase_MsrA_dom"/>
</dbReference>
<dbReference type="InterPro" id="IPR036509">
    <property type="entry name" value="Met_Sox_Rdtase_MsrA_sf"/>
</dbReference>
<dbReference type="NCBIfam" id="TIGR00401">
    <property type="entry name" value="msrA"/>
    <property type="match status" value="1"/>
</dbReference>
<dbReference type="PANTHER" id="PTHR43774">
    <property type="entry name" value="PEPTIDE METHIONINE SULFOXIDE REDUCTASE"/>
    <property type="match status" value="1"/>
</dbReference>
<dbReference type="PANTHER" id="PTHR43774:SF1">
    <property type="entry name" value="PEPTIDE METHIONINE SULFOXIDE REDUCTASE MSRA 2"/>
    <property type="match status" value="1"/>
</dbReference>
<dbReference type="Pfam" id="PF01625">
    <property type="entry name" value="PMSR"/>
    <property type="match status" value="1"/>
</dbReference>
<dbReference type="SUPFAM" id="SSF55068">
    <property type="entry name" value="Peptide methionine sulfoxide reductase"/>
    <property type="match status" value="1"/>
</dbReference>
<organism>
    <name type="scientific">Ralstonia nicotianae (strain ATCC BAA-1114 / GMI1000)</name>
    <name type="common">Ralstonia solanacearum</name>
    <dbReference type="NCBI Taxonomy" id="267608"/>
    <lineage>
        <taxon>Bacteria</taxon>
        <taxon>Pseudomonadati</taxon>
        <taxon>Pseudomonadota</taxon>
        <taxon>Betaproteobacteria</taxon>
        <taxon>Burkholderiales</taxon>
        <taxon>Burkholderiaceae</taxon>
        <taxon>Ralstonia</taxon>
        <taxon>Ralstonia solanacearum species complex</taxon>
    </lineage>
</organism>
<accession>Q8Y1C6</accession>
<evidence type="ECO:0000255" key="1">
    <source>
        <dbReference type="HAMAP-Rule" id="MF_01401"/>
    </source>
</evidence>
<protein>
    <recommendedName>
        <fullName evidence="1">Peptide methionine sulfoxide reductase MsrA</fullName>
        <shortName evidence="1">Protein-methionine-S-oxide reductase</shortName>
        <ecNumber evidence="1">1.8.4.11</ecNumber>
    </recommendedName>
    <alternativeName>
        <fullName evidence="1">Peptide-methionine (S)-S-oxide reductase</fullName>
        <shortName evidence="1">Peptide Met(O) reductase</shortName>
    </alternativeName>
</protein>
<name>MSRA_RALN1</name>
<proteinExistence type="inferred from homology"/>
<feature type="chain" id="PRO_0000138570" description="Peptide methionine sulfoxide reductase MsrA">
    <location>
        <begin position="1"/>
        <end position="191"/>
    </location>
</feature>
<feature type="active site" evidence="1">
    <location>
        <position position="21"/>
    </location>
</feature>
<reference key="1">
    <citation type="journal article" date="2002" name="Nature">
        <title>Genome sequence of the plant pathogen Ralstonia solanacearum.</title>
        <authorList>
            <person name="Salanoubat M."/>
            <person name="Genin S."/>
            <person name="Artiguenave F."/>
            <person name="Gouzy J."/>
            <person name="Mangenot S."/>
            <person name="Arlat M."/>
            <person name="Billault A."/>
            <person name="Brottier P."/>
            <person name="Camus J.-C."/>
            <person name="Cattolico L."/>
            <person name="Chandler M."/>
            <person name="Choisne N."/>
            <person name="Claudel-Renard C."/>
            <person name="Cunnac S."/>
            <person name="Demange N."/>
            <person name="Gaspin C."/>
            <person name="Lavie M."/>
            <person name="Moisan A."/>
            <person name="Robert C."/>
            <person name="Saurin W."/>
            <person name="Schiex T."/>
            <person name="Siguier P."/>
            <person name="Thebault P."/>
            <person name="Whalen M."/>
            <person name="Wincker P."/>
            <person name="Levy M."/>
            <person name="Weissenbach J."/>
            <person name="Boucher C.A."/>
        </authorList>
    </citation>
    <scope>NUCLEOTIDE SEQUENCE [LARGE SCALE GENOMIC DNA]</scope>
    <source>
        <strain>ATCC BAA-1114 / GMI1000</strain>
    </source>
</reference>
<gene>
    <name evidence="1" type="primary">msrA</name>
    <name type="ordered locus">RSc0764</name>
    <name type="ORF">RS05089</name>
</gene>
<comment type="function">
    <text evidence="1">Has an important function as a repair enzyme for proteins that have been inactivated by oxidation. Catalyzes the reversible oxidation-reduction of methionine sulfoxide in proteins to methionine.</text>
</comment>
<comment type="catalytic activity">
    <reaction evidence="1">
        <text>L-methionyl-[protein] + [thioredoxin]-disulfide + H2O = L-methionyl-(S)-S-oxide-[protein] + [thioredoxin]-dithiol</text>
        <dbReference type="Rhea" id="RHEA:14217"/>
        <dbReference type="Rhea" id="RHEA-COMP:10698"/>
        <dbReference type="Rhea" id="RHEA-COMP:10700"/>
        <dbReference type="Rhea" id="RHEA-COMP:12313"/>
        <dbReference type="Rhea" id="RHEA-COMP:12315"/>
        <dbReference type="ChEBI" id="CHEBI:15377"/>
        <dbReference type="ChEBI" id="CHEBI:16044"/>
        <dbReference type="ChEBI" id="CHEBI:29950"/>
        <dbReference type="ChEBI" id="CHEBI:44120"/>
        <dbReference type="ChEBI" id="CHEBI:50058"/>
        <dbReference type="EC" id="1.8.4.11"/>
    </reaction>
</comment>
<comment type="catalytic activity">
    <reaction evidence="1">
        <text>[thioredoxin]-disulfide + L-methionine + H2O = L-methionine (S)-S-oxide + [thioredoxin]-dithiol</text>
        <dbReference type="Rhea" id="RHEA:19993"/>
        <dbReference type="Rhea" id="RHEA-COMP:10698"/>
        <dbReference type="Rhea" id="RHEA-COMP:10700"/>
        <dbReference type="ChEBI" id="CHEBI:15377"/>
        <dbReference type="ChEBI" id="CHEBI:29950"/>
        <dbReference type="ChEBI" id="CHEBI:50058"/>
        <dbReference type="ChEBI" id="CHEBI:57844"/>
        <dbReference type="ChEBI" id="CHEBI:58772"/>
        <dbReference type="EC" id="1.8.4.11"/>
    </reaction>
</comment>
<comment type="similarity">
    <text evidence="1">Belongs to the MsrA Met sulfoxide reductase family.</text>
</comment>
<sequence length="191" mass="21023">MQESTMTERQALETAVLGGGCFWCTEAVFQQVQGVHSVVSGYAGGHLERPTYRAVCGGDTGHAEVVRVEFDPAVIPYREILDIFFATHDPTTLERQGNDIGPQYRSAVFAQSPEQFAEAGATIRALSAANVFDAPIVTEVVDASGGKVPFWQAEDEHQNYFRDHPAQGYCAFVISPKVAKFRERFAHRLQA</sequence>